<protein>
    <recommendedName>
        <fullName evidence="1">Ribitol-5-phosphate cytidylyltransferase 1</fullName>
        <ecNumber evidence="1">2.7.7.40</ecNumber>
    </recommendedName>
</protein>
<gene>
    <name evidence="1" type="primary">tarI1</name>
    <name type="ordered locus">SACOL0240</name>
</gene>
<accession>Q5HJC1</accession>
<keyword id="KW-0961">Cell wall biogenesis/degradation</keyword>
<keyword id="KW-0548">Nucleotidyltransferase</keyword>
<keyword id="KW-0777">Teichoic acid biosynthesis</keyword>
<keyword id="KW-0808">Transferase</keyword>
<dbReference type="EC" id="2.7.7.40" evidence="1"/>
<dbReference type="EMBL" id="CP000046">
    <property type="protein sequence ID" value="AAW38795.1"/>
    <property type="molecule type" value="Genomic_DNA"/>
</dbReference>
<dbReference type="RefSeq" id="WP_000872486.1">
    <property type="nucleotide sequence ID" value="NZ_JBGOFO010000001.1"/>
</dbReference>
<dbReference type="SMR" id="Q5HJC1"/>
<dbReference type="KEGG" id="sac:SACOL0240"/>
<dbReference type="HOGENOM" id="CLU_061281_2_3_9"/>
<dbReference type="UniPathway" id="UPA00790"/>
<dbReference type="Proteomes" id="UP000000530">
    <property type="component" value="Chromosome"/>
</dbReference>
<dbReference type="GO" id="GO:0050518">
    <property type="term" value="F:2-C-methyl-D-erythritol 4-phosphate cytidylyltransferase activity"/>
    <property type="evidence" value="ECO:0007669"/>
    <property type="project" value="TreeGrafter"/>
</dbReference>
<dbReference type="GO" id="GO:0047349">
    <property type="term" value="F:D-ribitol-5-phosphate cytidylyltransferase activity"/>
    <property type="evidence" value="ECO:0007669"/>
    <property type="project" value="UniProtKB-UniRule"/>
</dbReference>
<dbReference type="GO" id="GO:0071555">
    <property type="term" value="P:cell wall organization"/>
    <property type="evidence" value="ECO:0007669"/>
    <property type="project" value="UniProtKB-KW"/>
</dbReference>
<dbReference type="GO" id="GO:0008299">
    <property type="term" value="P:isoprenoid biosynthetic process"/>
    <property type="evidence" value="ECO:0007669"/>
    <property type="project" value="InterPro"/>
</dbReference>
<dbReference type="GO" id="GO:1902012">
    <property type="term" value="P:poly(ribitol phosphate) teichoic acid biosynthetic process"/>
    <property type="evidence" value="ECO:0007669"/>
    <property type="project" value="UniProtKB-UniRule"/>
</dbReference>
<dbReference type="CDD" id="cd02516">
    <property type="entry name" value="CDP-ME_synthetase"/>
    <property type="match status" value="1"/>
</dbReference>
<dbReference type="FunFam" id="3.90.550.10:FF:000003">
    <property type="entry name" value="2-C-methyl-D-erythritol 4-phosphate cytidylyltransferase"/>
    <property type="match status" value="1"/>
</dbReference>
<dbReference type="Gene3D" id="3.90.550.10">
    <property type="entry name" value="Spore Coat Polysaccharide Biosynthesis Protein SpsA, Chain A"/>
    <property type="match status" value="1"/>
</dbReference>
<dbReference type="HAMAP" id="MF_02068">
    <property type="entry name" value="TarI"/>
    <property type="match status" value="1"/>
</dbReference>
<dbReference type="InterPro" id="IPR034683">
    <property type="entry name" value="IspD/TarI"/>
</dbReference>
<dbReference type="InterPro" id="IPR050088">
    <property type="entry name" value="IspD/TarI_cytidylyltransf_bact"/>
</dbReference>
<dbReference type="InterPro" id="IPR018294">
    <property type="entry name" value="ISPD_synthase_CS"/>
</dbReference>
<dbReference type="InterPro" id="IPR029044">
    <property type="entry name" value="Nucleotide-diphossugar_trans"/>
</dbReference>
<dbReference type="InterPro" id="IPR034709">
    <property type="entry name" value="TarI"/>
</dbReference>
<dbReference type="NCBIfam" id="NF001183">
    <property type="entry name" value="PRK00155.1-3"/>
    <property type="match status" value="1"/>
</dbReference>
<dbReference type="NCBIfam" id="NF009924">
    <property type="entry name" value="PRK13385.1"/>
    <property type="match status" value="1"/>
</dbReference>
<dbReference type="PANTHER" id="PTHR32125">
    <property type="entry name" value="2-C-METHYL-D-ERYTHRITOL 4-PHOSPHATE CYTIDYLYLTRANSFERASE, CHLOROPLASTIC"/>
    <property type="match status" value="1"/>
</dbReference>
<dbReference type="PANTHER" id="PTHR32125:SF8">
    <property type="entry name" value="RIBITOL-5-PHOSPHATE CYTIDYLYLTRANSFERASE"/>
    <property type="match status" value="1"/>
</dbReference>
<dbReference type="Pfam" id="PF01128">
    <property type="entry name" value="IspD"/>
    <property type="match status" value="1"/>
</dbReference>
<dbReference type="SUPFAM" id="SSF53448">
    <property type="entry name" value="Nucleotide-diphospho-sugar transferases"/>
    <property type="match status" value="1"/>
</dbReference>
<dbReference type="PROSITE" id="PS01295">
    <property type="entry name" value="ISPD"/>
    <property type="match status" value="1"/>
</dbReference>
<sequence>MKYAGILAGGIGSRMGNVPLPKQFLDLDNKPILIHTLEKFILINDFEKIIIATPQQWMTHTKDTLRKFKISDERIEVIQGGSDRNDTIMNIVKHIESTNGINDDDVIVTHDAVRPFLTHRIIKENIQAALEYGAVDTVIDAIDTIVTSKDNQTIDAIPVRNEMYQGQTPQSFNINLLKESYAQLSDEQKSILSDACKIIVETNKPVRLVKGELYNIKVTTPYDLKVANAIIRGGIADD</sequence>
<reference key="1">
    <citation type="journal article" date="2005" name="J. Bacteriol.">
        <title>Insights on evolution of virulence and resistance from the complete genome analysis of an early methicillin-resistant Staphylococcus aureus strain and a biofilm-producing methicillin-resistant Staphylococcus epidermidis strain.</title>
        <authorList>
            <person name="Gill S.R."/>
            <person name="Fouts D.E."/>
            <person name="Archer G.L."/>
            <person name="Mongodin E.F."/>
            <person name="DeBoy R.T."/>
            <person name="Ravel J."/>
            <person name="Paulsen I.T."/>
            <person name="Kolonay J.F."/>
            <person name="Brinkac L.M."/>
            <person name="Beanan M.J."/>
            <person name="Dodson R.J."/>
            <person name="Daugherty S.C."/>
            <person name="Madupu R."/>
            <person name="Angiuoli S.V."/>
            <person name="Durkin A.S."/>
            <person name="Haft D.H."/>
            <person name="Vamathevan J.J."/>
            <person name="Khouri H."/>
            <person name="Utterback T.R."/>
            <person name="Lee C."/>
            <person name="Dimitrov G."/>
            <person name="Jiang L."/>
            <person name="Qin H."/>
            <person name="Weidman J."/>
            <person name="Tran K."/>
            <person name="Kang K.H."/>
            <person name="Hance I.R."/>
            <person name="Nelson K.E."/>
            <person name="Fraser C.M."/>
        </authorList>
    </citation>
    <scope>NUCLEOTIDE SEQUENCE [LARGE SCALE GENOMIC DNA]</scope>
    <source>
        <strain>COL</strain>
    </source>
</reference>
<feature type="chain" id="PRO_0000075614" description="Ribitol-5-phosphate cytidylyltransferase 1">
    <location>
        <begin position="1"/>
        <end position="238"/>
    </location>
</feature>
<feature type="binding site" evidence="1">
    <location>
        <begin position="7"/>
        <end position="10"/>
    </location>
    <ligand>
        <name>CTP</name>
        <dbReference type="ChEBI" id="CHEBI:37563"/>
    </ligand>
</feature>
<feature type="binding site" evidence="1">
    <location>
        <begin position="81"/>
        <end position="87"/>
    </location>
    <ligand>
        <name>CTP</name>
        <dbReference type="ChEBI" id="CHEBI:37563"/>
    </ligand>
</feature>
<feature type="site" description="Transition state stabilizer" evidence="1">
    <location>
        <position position="14"/>
    </location>
</feature>
<feature type="site" description="Transition state stabilizer" evidence="1">
    <location>
        <position position="22"/>
    </location>
</feature>
<feature type="site" description="Positions ribitol 5-phosphate for the nucleophilic attack" evidence="1">
    <location>
        <position position="160"/>
    </location>
</feature>
<feature type="site" description="Positions ribitol 5-phosphate for the nucleophilic attack" evidence="1">
    <location>
        <position position="217"/>
    </location>
</feature>
<name>TARI1_STAAC</name>
<proteinExistence type="inferred from homology"/>
<comment type="function">
    <text evidence="1">Catalyzes the transfer of the cytidylyl group of CTP to D-ribitol 5-phosphate.</text>
</comment>
<comment type="catalytic activity">
    <reaction evidence="1">
        <text>D-ribitol 5-phosphate + CTP + H(+) = CDP-L-ribitol + diphosphate</text>
        <dbReference type="Rhea" id="RHEA:12456"/>
        <dbReference type="ChEBI" id="CHEBI:15378"/>
        <dbReference type="ChEBI" id="CHEBI:33019"/>
        <dbReference type="ChEBI" id="CHEBI:37563"/>
        <dbReference type="ChEBI" id="CHEBI:57608"/>
        <dbReference type="ChEBI" id="CHEBI:57695"/>
        <dbReference type="EC" id="2.7.7.40"/>
    </reaction>
</comment>
<comment type="pathway">
    <text evidence="1">Cell wall biogenesis; poly(ribitol phosphate) teichoic acid biosynthesis.</text>
</comment>
<comment type="similarity">
    <text evidence="1">Belongs to the IspD/TarI cytidylyltransferase family. TarI subfamily.</text>
</comment>
<organism>
    <name type="scientific">Staphylococcus aureus (strain COL)</name>
    <dbReference type="NCBI Taxonomy" id="93062"/>
    <lineage>
        <taxon>Bacteria</taxon>
        <taxon>Bacillati</taxon>
        <taxon>Bacillota</taxon>
        <taxon>Bacilli</taxon>
        <taxon>Bacillales</taxon>
        <taxon>Staphylococcaceae</taxon>
        <taxon>Staphylococcus</taxon>
    </lineage>
</organism>
<evidence type="ECO:0000255" key="1">
    <source>
        <dbReference type="HAMAP-Rule" id="MF_02068"/>
    </source>
</evidence>